<accession>Q8R9G2</accession>
<organism>
    <name type="scientific">Caldanaerobacter subterraneus subsp. tengcongensis (strain DSM 15242 / JCM 11007 / NBRC 100824 / MB4)</name>
    <name type="common">Thermoanaerobacter tengcongensis</name>
    <dbReference type="NCBI Taxonomy" id="273068"/>
    <lineage>
        <taxon>Bacteria</taxon>
        <taxon>Bacillati</taxon>
        <taxon>Bacillota</taxon>
        <taxon>Clostridia</taxon>
        <taxon>Thermoanaerobacterales</taxon>
        <taxon>Thermoanaerobacteraceae</taxon>
        <taxon>Caldanaerobacter</taxon>
    </lineage>
</organism>
<evidence type="ECO:0000255" key="1">
    <source>
        <dbReference type="HAMAP-Rule" id="MF_00208"/>
    </source>
</evidence>
<evidence type="ECO:0000305" key="2"/>
<comment type="function">
    <text evidence="1">Catalyzes the addition of meso-diaminopimelic acid to the nucleotide precursor UDP-N-acetylmuramoyl-L-alanyl-D-glutamate (UMAG) in the biosynthesis of bacterial cell-wall peptidoglycan.</text>
</comment>
<comment type="catalytic activity">
    <reaction evidence="1">
        <text>UDP-N-acetyl-alpha-D-muramoyl-L-alanyl-D-glutamate + meso-2,6-diaminopimelate + ATP = UDP-N-acetyl-alpha-D-muramoyl-L-alanyl-gamma-D-glutamyl-meso-2,6-diaminopimelate + ADP + phosphate + H(+)</text>
        <dbReference type="Rhea" id="RHEA:23676"/>
        <dbReference type="ChEBI" id="CHEBI:15378"/>
        <dbReference type="ChEBI" id="CHEBI:30616"/>
        <dbReference type="ChEBI" id="CHEBI:43474"/>
        <dbReference type="ChEBI" id="CHEBI:57791"/>
        <dbReference type="ChEBI" id="CHEBI:83900"/>
        <dbReference type="ChEBI" id="CHEBI:83905"/>
        <dbReference type="ChEBI" id="CHEBI:456216"/>
        <dbReference type="EC" id="6.3.2.13"/>
    </reaction>
</comment>
<comment type="cofactor">
    <cofactor evidence="1">
        <name>Mg(2+)</name>
        <dbReference type="ChEBI" id="CHEBI:18420"/>
    </cofactor>
</comment>
<comment type="pathway">
    <text evidence="1">Cell wall biogenesis; peptidoglycan biosynthesis.</text>
</comment>
<comment type="subcellular location">
    <subcellularLocation>
        <location evidence="1">Cytoplasm</location>
    </subcellularLocation>
</comment>
<comment type="PTM">
    <text evidence="1">Carboxylation is probably crucial for Mg(2+) binding and, consequently, for the gamma-phosphate positioning of ATP.</text>
</comment>
<comment type="similarity">
    <text evidence="1">Belongs to the MurCDEF family. MurE subfamily.</text>
</comment>
<comment type="sequence caution" evidence="2">
    <conflict type="erroneous initiation">
        <sequence resource="EMBL-CDS" id="AAM24851"/>
    </conflict>
</comment>
<sequence>MRLVDLLKGVKHEIKGNPNVDISGVCYDSRKAKPKYLFIAIKGFKTDGLLYVEEAIKNGAVAVVTDRDISEYPGVTVVLVEDARAAMAKIASNFYNNPTSKLTLIGITGTNGKTSVTYMLKAILEQQNNKVGLVGTIQNMIGDRVIPTTHTTPESLDLQELFSLMVNEGVKYVVMEVSSHSLALHRVDSCDFDIAVFTNLSQDHLDFHESMEEYAKTKSKLFKMAKKASVINIDDKYSSMMIESSKGKVLTYGIKDFAYVMAKEIKNSLSGVKFKVQIQDKKEEISLKIPGLFSVYNALAAITVADFLGIPLRSVREALSHVTVKGRFEPVETGRDFYVFIDYAHTPDGIRNIMEALKEYEAGRKILVFGAGGDRDKSKRPLMGEVAGKYADFCILTSDNPRSENPKEIIAQIEEGIKKTNCPYVVIEDRREAIRYALSNAQKDDVIILAGKGHETYQIIGDKVIPFDEREIVKEILAESEK</sequence>
<keyword id="KW-0067">ATP-binding</keyword>
<keyword id="KW-0131">Cell cycle</keyword>
<keyword id="KW-0132">Cell division</keyword>
<keyword id="KW-0133">Cell shape</keyword>
<keyword id="KW-0961">Cell wall biogenesis/degradation</keyword>
<keyword id="KW-0963">Cytoplasm</keyword>
<keyword id="KW-0436">Ligase</keyword>
<keyword id="KW-0460">Magnesium</keyword>
<keyword id="KW-0547">Nucleotide-binding</keyword>
<keyword id="KW-0573">Peptidoglycan synthesis</keyword>
<keyword id="KW-1185">Reference proteome</keyword>
<proteinExistence type="inferred from homology"/>
<reference key="1">
    <citation type="journal article" date="2002" name="Genome Res.">
        <title>A complete sequence of the T. tengcongensis genome.</title>
        <authorList>
            <person name="Bao Q."/>
            <person name="Tian Y."/>
            <person name="Li W."/>
            <person name="Xu Z."/>
            <person name="Xuan Z."/>
            <person name="Hu S."/>
            <person name="Dong W."/>
            <person name="Yang J."/>
            <person name="Chen Y."/>
            <person name="Xue Y."/>
            <person name="Xu Y."/>
            <person name="Lai X."/>
            <person name="Huang L."/>
            <person name="Dong X."/>
            <person name="Ma Y."/>
            <person name="Ling L."/>
            <person name="Tan H."/>
            <person name="Chen R."/>
            <person name="Wang J."/>
            <person name="Yu J."/>
            <person name="Yang H."/>
        </authorList>
    </citation>
    <scope>NUCLEOTIDE SEQUENCE [LARGE SCALE GENOMIC DNA]</scope>
    <source>
        <strain>DSM 15242 / JCM 11007 / NBRC 100824 / MB4</strain>
    </source>
</reference>
<feature type="chain" id="PRO_0000101963" description="UDP-N-acetylmuramoyl-L-alanyl-D-glutamate--2,6-diaminopimelate ligase">
    <location>
        <begin position="1"/>
        <end position="482"/>
    </location>
</feature>
<feature type="short sequence motif" description="Meso-diaminopimelate recognition motif">
    <location>
        <begin position="399"/>
        <end position="402"/>
    </location>
</feature>
<feature type="binding site" evidence="1">
    <location>
        <position position="29"/>
    </location>
    <ligand>
        <name>UDP-N-acetyl-alpha-D-muramoyl-L-alanyl-D-glutamate</name>
        <dbReference type="ChEBI" id="CHEBI:83900"/>
    </ligand>
</feature>
<feature type="binding site" evidence="1">
    <location>
        <begin position="109"/>
        <end position="115"/>
    </location>
    <ligand>
        <name>ATP</name>
        <dbReference type="ChEBI" id="CHEBI:30616"/>
    </ligand>
</feature>
<feature type="binding site" evidence="1">
    <location>
        <begin position="151"/>
        <end position="152"/>
    </location>
    <ligand>
        <name>UDP-N-acetyl-alpha-D-muramoyl-L-alanyl-D-glutamate</name>
        <dbReference type="ChEBI" id="CHEBI:83900"/>
    </ligand>
</feature>
<feature type="binding site" evidence="1">
    <location>
        <position position="178"/>
    </location>
    <ligand>
        <name>UDP-N-acetyl-alpha-D-muramoyl-L-alanyl-D-glutamate</name>
        <dbReference type="ChEBI" id="CHEBI:83900"/>
    </ligand>
</feature>
<feature type="binding site" evidence="1">
    <location>
        <position position="186"/>
    </location>
    <ligand>
        <name>UDP-N-acetyl-alpha-D-muramoyl-L-alanyl-D-glutamate</name>
        <dbReference type="ChEBI" id="CHEBI:83900"/>
    </ligand>
</feature>
<feature type="binding site" evidence="1">
    <location>
        <position position="375"/>
    </location>
    <ligand>
        <name>meso-2,6-diaminopimelate</name>
        <dbReference type="ChEBI" id="CHEBI:57791"/>
    </ligand>
</feature>
<feature type="binding site" evidence="1">
    <location>
        <begin position="399"/>
        <end position="402"/>
    </location>
    <ligand>
        <name>meso-2,6-diaminopimelate</name>
        <dbReference type="ChEBI" id="CHEBI:57791"/>
    </ligand>
</feature>
<feature type="binding site" evidence="1">
    <location>
        <position position="451"/>
    </location>
    <ligand>
        <name>meso-2,6-diaminopimelate</name>
        <dbReference type="ChEBI" id="CHEBI:57791"/>
    </ligand>
</feature>
<feature type="binding site" evidence="1">
    <location>
        <position position="455"/>
    </location>
    <ligand>
        <name>meso-2,6-diaminopimelate</name>
        <dbReference type="ChEBI" id="CHEBI:57791"/>
    </ligand>
</feature>
<feature type="modified residue" description="N6-carboxylysine" evidence="1">
    <location>
        <position position="218"/>
    </location>
</feature>
<name>MURE_CALS4</name>
<dbReference type="EC" id="6.3.2.13" evidence="1"/>
<dbReference type="EMBL" id="AE008691">
    <property type="protein sequence ID" value="AAM24851.1"/>
    <property type="status" value="ALT_INIT"/>
    <property type="molecule type" value="Genomic_DNA"/>
</dbReference>
<dbReference type="RefSeq" id="WP_031313955.1">
    <property type="nucleotide sequence ID" value="NZ_JANUCV010000001.1"/>
</dbReference>
<dbReference type="SMR" id="Q8R9G2"/>
<dbReference type="STRING" id="273068.TTE1649"/>
<dbReference type="KEGG" id="tte:TTE1649"/>
<dbReference type="eggNOG" id="COG0769">
    <property type="taxonomic scope" value="Bacteria"/>
</dbReference>
<dbReference type="HOGENOM" id="CLU_022291_4_1_9"/>
<dbReference type="OrthoDB" id="9800958at2"/>
<dbReference type="UniPathway" id="UPA00219"/>
<dbReference type="Proteomes" id="UP000000555">
    <property type="component" value="Chromosome"/>
</dbReference>
<dbReference type="GO" id="GO:0005737">
    <property type="term" value="C:cytoplasm"/>
    <property type="evidence" value="ECO:0007669"/>
    <property type="project" value="UniProtKB-SubCell"/>
</dbReference>
<dbReference type="GO" id="GO:0005524">
    <property type="term" value="F:ATP binding"/>
    <property type="evidence" value="ECO:0007669"/>
    <property type="project" value="UniProtKB-UniRule"/>
</dbReference>
<dbReference type="GO" id="GO:0000287">
    <property type="term" value="F:magnesium ion binding"/>
    <property type="evidence" value="ECO:0007669"/>
    <property type="project" value="UniProtKB-UniRule"/>
</dbReference>
<dbReference type="GO" id="GO:0008765">
    <property type="term" value="F:UDP-N-acetylmuramoylalanyl-D-glutamate-2,6-diaminopimelate ligase activity"/>
    <property type="evidence" value="ECO:0007669"/>
    <property type="project" value="UniProtKB-UniRule"/>
</dbReference>
<dbReference type="GO" id="GO:0051301">
    <property type="term" value="P:cell division"/>
    <property type="evidence" value="ECO:0007669"/>
    <property type="project" value="UniProtKB-KW"/>
</dbReference>
<dbReference type="GO" id="GO:0071555">
    <property type="term" value="P:cell wall organization"/>
    <property type="evidence" value="ECO:0007669"/>
    <property type="project" value="UniProtKB-KW"/>
</dbReference>
<dbReference type="GO" id="GO:0009252">
    <property type="term" value="P:peptidoglycan biosynthetic process"/>
    <property type="evidence" value="ECO:0007669"/>
    <property type="project" value="UniProtKB-UniRule"/>
</dbReference>
<dbReference type="GO" id="GO:0008360">
    <property type="term" value="P:regulation of cell shape"/>
    <property type="evidence" value="ECO:0007669"/>
    <property type="project" value="UniProtKB-KW"/>
</dbReference>
<dbReference type="Gene3D" id="3.90.190.20">
    <property type="entry name" value="Mur ligase, C-terminal domain"/>
    <property type="match status" value="1"/>
</dbReference>
<dbReference type="Gene3D" id="3.40.1190.10">
    <property type="entry name" value="Mur-like, catalytic domain"/>
    <property type="match status" value="1"/>
</dbReference>
<dbReference type="Gene3D" id="3.40.1390.10">
    <property type="entry name" value="MurE/MurF, N-terminal domain"/>
    <property type="match status" value="1"/>
</dbReference>
<dbReference type="HAMAP" id="MF_00208">
    <property type="entry name" value="MurE"/>
    <property type="match status" value="1"/>
</dbReference>
<dbReference type="InterPro" id="IPR036565">
    <property type="entry name" value="Mur-like_cat_sf"/>
</dbReference>
<dbReference type="InterPro" id="IPR004101">
    <property type="entry name" value="Mur_ligase_C"/>
</dbReference>
<dbReference type="InterPro" id="IPR036615">
    <property type="entry name" value="Mur_ligase_C_dom_sf"/>
</dbReference>
<dbReference type="InterPro" id="IPR013221">
    <property type="entry name" value="Mur_ligase_cen"/>
</dbReference>
<dbReference type="InterPro" id="IPR000713">
    <property type="entry name" value="Mur_ligase_N"/>
</dbReference>
<dbReference type="InterPro" id="IPR035911">
    <property type="entry name" value="MurE/MurF_N"/>
</dbReference>
<dbReference type="InterPro" id="IPR005761">
    <property type="entry name" value="UDP-N-AcMur-Glu-dNH2Pim_ligase"/>
</dbReference>
<dbReference type="NCBIfam" id="TIGR01085">
    <property type="entry name" value="murE"/>
    <property type="match status" value="1"/>
</dbReference>
<dbReference type="NCBIfam" id="NF001124">
    <property type="entry name" value="PRK00139.1-2"/>
    <property type="match status" value="1"/>
</dbReference>
<dbReference type="NCBIfam" id="NF001126">
    <property type="entry name" value="PRK00139.1-4"/>
    <property type="match status" value="1"/>
</dbReference>
<dbReference type="PANTHER" id="PTHR23135">
    <property type="entry name" value="MUR LIGASE FAMILY MEMBER"/>
    <property type="match status" value="1"/>
</dbReference>
<dbReference type="PANTHER" id="PTHR23135:SF4">
    <property type="entry name" value="UDP-N-ACETYLMURAMOYL-L-ALANYL-D-GLUTAMATE--2,6-DIAMINOPIMELATE LIGASE MURE HOMOLOG, CHLOROPLASTIC"/>
    <property type="match status" value="1"/>
</dbReference>
<dbReference type="Pfam" id="PF01225">
    <property type="entry name" value="Mur_ligase"/>
    <property type="match status" value="1"/>
</dbReference>
<dbReference type="Pfam" id="PF02875">
    <property type="entry name" value="Mur_ligase_C"/>
    <property type="match status" value="1"/>
</dbReference>
<dbReference type="Pfam" id="PF08245">
    <property type="entry name" value="Mur_ligase_M"/>
    <property type="match status" value="1"/>
</dbReference>
<dbReference type="SUPFAM" id="SSF53623">
    <property type="entry name" value="MurD-like peptide ligases, catalytic domain"/>
    <property type="match status" value="1"/>
</dbReference>
<dbReference type="SUPFAM" id="SSF53244">
    <property type="entry name" value="MurD-like peptide ligases, peptide-binding domain"/>
    <property type="match status" value="1"/>
</dbReference>
<dbReference type="SUPFAM" id="SSF63418">
    <property type="entry name" value="MurE/MurF N-terminal domain"/>
    <property type="match status" value="1"/>
</dbReference>
<protein>
    <recommendedName>
        <fullName evidence="1">UDP-N-acetylmuramoyl-L-alanyl-D-glutamate--2,6-diaminopimelate ligase</fullName>
        <ecNumber evidence="1">6.3.2.13</ecNumber>
    </recommendedName>
    <alternativeName>
        <fullName evidence="1">Meso-A2pm-adding enzyme</fullName>
    </alternativeName>
    <alternativeName>
        <fullName evidence="1">Meso-diaminopimelate-adding enzyme</fullName>
    </alternativeName>
    <alternativeName>
        <fullName evidence="1">UDP-MurNAc-L-Ala-D-Glu:meso-diaminopimelate ligase</fullName>
    </alternativeName>
    <alternativeName>
        <fullName evidence="1">UDP-MurNAc-tripeptide synthetase</fullName>
    </alternativeName>
    <alternativeName>
        <fullName evidence="1">UDP-N-acetylmuramyl-tripeptide synthetase</fullName>
    </alternativeName>
</protein>
<gene>
    <name evidence="1" type="primary">murE</name>
    <name type="synonym">murE2</name>
    <name type="ordered locus">TTE1649</name>
</gene>